<gene>
    <name type="primary">hom</name>
    <name type="synonym">thrA</name>
    <name type="ordered locus">Cgl1183</name>
    <name type="ordered locus">cg1337</name>
</gene>
<name>DHOM_CORGL</name>
<organism>
    <name type="scientific">Corynebacterium glutamicum (strain ATCC 13032 / DSM 20300 / JCM 1318 / BCRC 11384 / CCUG 27702 / LMG 3730 / NBRC 12168 / NCIMB 10025 / NRRL B-2784 / 534)</name>
    <dbReference type="NCBI Taxonomy" id="196627"/>
    <lineage>
        <taxon>Bacteria</taxon>
        <taxon>Bacillati</taxon>
        <taxon>Actinomycetota</taxon>
        <taxon>Actinomycetes</taxon>
        <taxon>Mycobacteriales</taxon>
        <taxon>Corynebacteriaceae</taxon>
        <taxon>Corynebacterium</taxon>
    </lineage>
</organism>
<dbReference type="EC" id="1.1.1.3" evidence="3"/>
<dbReference type="EMBL" id="Y00546">
    <property type="protein sequence ID" value="CAA68614.1"/>
    <property type="molecule type" value="Genomic_DNA"/>
</dbReference>
<dbReference type="EMBL" id="Y00476">
    <property type="protein sequence ID" value="CAA68536.1"/>
    <property type="molecule type" value="Genomic_DNA"/>
</dbReference>
<dbReference type="EMBL" id="BA000036">
    <property type="protein sequence ID" value="BAB98576.1"/>
    <property type="molecule type" value="Genomic_DNA"/>
</dbReference>
<dbReference type="EMBL" id="BX927151">
    <property type="protein sequence ID" value="CAF19887.1"/>
    <property type="molecule type" value="Genomic_DNA"/>
</dbReference>
<dbReference type="PIR" id="S00865">
    <property type="entry name" value="DEFKHG"/>
</dbReference>
<dbReference type="RefSeq" id="NP_600409.1">
    <property type="nucleotide sequence ID" value="NC_003450.3"/>
</dbReference>
<dbReference type="RefSeq" id="WP_003854900.1">
    <property type="nucleotide sequence ID" value="NC_006958.1"/>
</dbReference>
<dbReference type="SMR" id="P08499"/>
<dbReference type="STRING" id="196627.cg1337"/>
<dbReference type="DNASU" id="3343957"/>
<dbReference type="KEGG" id="cgb:cg1337"/>
<dbReference type="KEGG" id="cgl:Cgl1183"/>
<dbReference type="PATRIC" id="fig|196627.13.peg.1162"/>
<dbReference type="eggNOG" id="COG0460">
    <property type="taxonomic scope" value="Bacteria"/>
</dbReference>
<dbReference type="HOGENOM" id="CLU_009116_1_0_11"/>
<dbReference type="OrthoDB" id="9808167at2"/>
<dbReference type="BioCyc" id="CORYNE:G18NG-10756-MONOMER"/>
<dbReference type="BRENDA" id="1.1.1.3">
    <property type="organism ID" value="960"/>
</dbReference>
<dbReference type="UniPathway" id="UPA00050">
    <property type="reaction ID" value="UER00063"/>
</dbReference>
<dbReference type="UniPathway" id="UPA00051">
    <property type="reaction ID" value="UER00465"/>
</dbReference>
<dbReference type="Proteomes" id="UP000000582">
    <property type="component" value="Chromosome"/>
</dbReference>
<dbReference type="Proteomes" id="UP000001009">
    <property type="component" value="Chromosome"/>
</dbReference>
<dbReference type="GO" id="GO:0004412">
    <property type="term" value="F:homoserine dehydrogenase activity"/>
    <property type="evidence" value="ECO:0000250"/>
    <property type="project" value="UniProtKB"/>
</dbReference>
<dbReference type="GO" id="GO:0046872">
    <property type="term" value="F:metal ion binding"/>
    <property type="evidence" value="ECO:0007669"/>
    <property type="project" value="UniProtKB-KW"/>
</dbReference>
<dbReference type="GO" id="GO:0070403">
    <property type="term" value="F:NAD+ binding"/>
    <property type="evidence" value="ECO:0000250"/>
    <property type="project" value="UniProtKB"/>
</dbReference>
<dbReference type="GO" id="GO:0050661">
    <property type="term" value="F:NADP binding"/>
    <property type="evidence" value="ECO:0007669"/>
    <property type="project" value="InterPro"/>
</dbReference>
<dbReference type="GO" id="GO:0009086">
    <property type="term" value="P:methionine biosynthetic process"/>
    <property type="evidence" value="ECO:0000250"/>
    <property type="project" value="UniProtKB"/>
</dbReference>
<dbReference type="GO" id="GO:0009088">
    <property type="term" value="P:threonine biosynthetic process"/>
    <property type="evidence" value="ECO:0000250"/>
    <property type="project" value="UniProtKB"/>
</dbReference>
<dbReference type="CDD" id="cd04881">
    <property type="entry name" value="ACT_HSDH-Hom"/>
    <property type="match status" value="1"/>
</dbReference>
<dbReference type="FunFam" id="3.30.360.10:FF:000005">
    <property type="entry name" value="Homoserine dehydrogenase"/>
    <property type="match status" value="1"/>
</dbReference>
<dbReference type="Gene3D" id="3.30.70.260">
    <property type="match status" value="1"/>
</dbReference>
<dbReference type="Gene3D" id="3.30.360.10">
    <property type="entry name" value="Dihydrodipicolinate Reductase, domain 2"/>
    <property type="match status" value="1"/>
</dbReference>
<dbReference type="Gene3D" id="3.40.50.720">
    <property type="entry name" value="NAD(P)-binding Rossmann-like Domain"/>
    <property type="match status" value="1"/>
</dbReference>
<dbReference type="InterPro" id="IPR045865">
    <property type="entry name" value="ACT-like_dom_sf"/>
</dbReference>
<dbReference type="InterPro" id="IPR002912">
    <property type="entry name" value="ACT_dom"/>
</dbReference>
<dbReference type="InterPro" id="IPR005106">
    <property type="entry name" value="Asp/hSer_DH_NAD-bd"/>
</dbReference>
<dbReference type="InterPro" id="IPR016204">
    <property type="entry name" value="HDH"/>
</dbReference>
<dbReference type="InterPro" id="IPR001342">
    <property type="entry name" value="HDH_cat"/>
</dbReference>
<dbReference type="InterPro" id="IPR019811">
    <property type="entry name" value="HDH_CS"/>
</dbReference>
<dbReference type="InterPro" id="IPR036291">
    <property type="entry name" value="NAD(P)-bd_dom_sf"/>
</dbReference>
<dbReference type="NCBIfam" id="NF004976">
    <property type="entry name" value="PRK06349.1"/>
    <property type="match status" value="1"/>
</dbReference>
<dbReference type="PANTHER" id="PTHR43331">
    <property type="entry name" value="HOMOSERINE DEHYDROGENASE"/>
    <property type="match status" value="1"/>
</dbReference>
<dbReference type="PANTHER" id="PTHR43331:SF1">
    <property type="entry name" value="HOMOSERINE DEHYDROGENASE"/>
    <property type="match status" value="1"/>
</dbReference>
<dbReference type="Pfam" id="PF01842">
    <property type="entry name" value="ACT"/>
    <property type="match status" value="1"/>
</dbReference>
<dbReference type="Pfam" id="PF00742">
    <property type="entry name" value="Homoserine_dh"/>
    <property type="match status" value="1"/>
</dbReference>
<dbReference type="Pfam" id="PF03447">
    <property type="entry name" value="NAD_binding_3"/>
    <property type="match status" value="1"/>
</dbReference>
<dbReference type="PIRSF" id="PIRSF000098">
    <property type="entry name" value="Homoser_dehydrog"/>
    <property type="match status" value="1"/>
</dbReference>
<dbReference type="SUPFAM" id="SSF55021">
    <property type="entry name" value="ACT-like"/>
    <property type="match status" value="1"/>
</dbReference>
<dbReference type="SUPFAM" id="SSF55347">
    <property type="entry name" value="Glyceraldehyde-3-phosphate dehydrogenase-like, C-terminal domain"/>
    <property type="match status" value="1"/>
</dbReference>
<dbReference type="SUPFAM" id="SSF51735">
    <property type="entry name" value="NAD(P)-binding Rossmann-fold domains"/>
    <property type="match status" value="1"/>
</dbReference>
<dbReference type="PROSITE" id="PS51671">
    <property type="entry name" value="ACT"/>
    <property type="match status" value="1"/>
</dbReference>
<dbReference type="PROSITE" id="PS01042">
    <property type="entry name" value="HOMOSER_DHGENASE"/>
    <property type="match status" value="1"/>
</dbReference>
<proteinExistence type="evidence at protein level"/>
<keyword id="KW-0028">Amino-acid biosynthesis</keyword>
<keyword id="KW-0479">Metal-binding</keyword>
<keyword id="KW-0486">Methionine biosynthesis</keyword>
<keyword id="KW-0520">NAD</keyword>
<keyword id="KW-0521">NADP</keyword>
<keyword id="KW-0560">Oxidoreductase</keyword>
<keyword id="KW-1185">Reference proteome</keyword>
<keyword id="KW-0915">Sodium</keyword>
<keyword id="KW-0791">Threonine biosynthesis</keyword>
<protein>
    <recommendedName>
        <fullName>Homoserine dehydrogenase</fullName>
        <shortName>HDH</shortName>
        <shortName>HSD</shortName>
        <ecNumber evidence="3">1.1.1.3</ecNumber>
    </recommendedName>
</protein>
<reference key="1">
    <citation type="journal article" date="1988" name="Mol. Microbiol.">
        <title>Nucleotide sequence and fine structural analysis of the Corynebacterium glutamicum hom-thrB operon.</title>
        <authorList>
            <person name="Peoples O.P."/>
            <person name="Liebl W."/>
            <person name="Bodis M."/>
            <person name="Maeng P.J."/>
            <person name="Follettie M.T."/>
            <person name="Archer J.A.C."/>
            <person name="Sinskey A.J."/>
        </authorList>
    </citation>
    <scope>NUCLEOTIDE SEQUENCE [GENOMIC DNA]</scope>
    <source>
        <strain>ATCC 13059 / LMG 3658 / NCIB 10332 / AS019 / 613</strain>
    </source>
</reference>
<reference key="2">
    <citation type="journal article" date="1987" name="Nucleic Acids Res.">
        <title>Nucleotide sequence of the homoserine dehydrogenase (thr A) gene of Brevibacterium lactofermentum.</title>
        <authorList>
            <person name="Mateos L.M."/>
            <person name="del Real G."/>
            <person name="Aguilar A."/>
            <person name="Martin J.F."/>
        </authorList>
    </citation>
    <scope>NUCLEOTIDE SEQUENCE [GENOMIC DNA]</scope>
</reference>
<reference key="3">
    <citation type="journal article" date="1997" name="Biosci. Biotechnol. Biochem.">
        <title>Sequence analysis of functional regions of homoserine dehydrogenase genes from L-lysine and L-threonine-producing mutants of Brevibacterium lactofermentum.</title>
        <authorList>
            <person name="Sugimoto M."/>
            <person name="Tanaka A."/>
            <person name="Suzuki T."/>
            <person name="Matsui H."/>
            <person name="Nakamori S."/>
            <person name="Takagi H."/>
        </authorList>
    </citation>
    <scope>NUCLEOTIDE SEQUENCE [GENOMIC DNA]</scope>
</reference>
<reference key="4">
    <citation type="journal article" date="2003" name="Appl. Microbiol. Biotechnol.">
        <title>The Corynebacterium glutamicum genome: features and impacts on biotechnological processes.</title>
        <authorList>
            <person name="Ikeda M."/>
            <person name="Nakagawa S."/>
        </authorList>
    </citation>
    <scope>NUCLEOTIDE SEQUENCE [LARGE SCALE GENOMIC DNA]</scope>
    <source>
        <strain>ATCC 13032 / DSM 20300 / JCM 1318 / BCRC 11384 / CCUG 27702 / LMG 3730 / NBRC 12168 / NCIMB 10025 / NRRL B-2784 / 534</strain>
    </source>
</reference>
<reference key="5">
    <citation type="journal article" date="2003" name="J. Biotechnol.">
        <title>The complete Corynebacterium glutamicum ATCC 13032 genome sequence and its impact on the production of L-aspartate-derived amino acids and vitamins.</title>
        <authorList>
            <person name="Kalinowski J."/>
            <person name="Bathe B."/>
            <person name="Bartels D."/>
            <person name="Bischoff N."/>
            <person name="Bott M."/>
            <person name="Burkovski A."/>
            <person name="Dusch N."/>
            <person name="Eggeling L."/>
            <person name="Eikmanns B.J."/>
            <person name="Gaigalat L."/>
            <person name="Goesmann A."/>
            <person name="Hartmann M."/>
            <person name="Huthmacher K."/>
            <person name="Kraemer R."/>
            <person name="Linke B."/>
            <person name="McHardy A.C."/>
            <person name="Meyer F."/>
            <person name="Moeckel B."/>
            <person name="Pfefferle W."/>
            <person name="Puehler A."/>
            <person name="Rey D.A."/>
            <person name="Rueckert C."/>
            <person name="Rupp O."/>
            <person name="Sahm H."/>
            <person name="Wendisch V.F."/>
            <person name="Wiegraebe I."/>
            <person name="Tauch A."/>
        </authorList>
    </citation>
    <scope>NUCLEOTIDE SEQUENCE [LARGE SCALE GENOMIC DNA]</scope>
    <source>
        <strain>ATCC 13032 / DSM 20300 / JCM 1318 / BCRC 11384 / CCUG 27702 / LMG 3730 / NBRC 12168 / NCIMB 10025 / NRRL B-2784 / 534</strain>
    </source>
</reference>
<reference key="6">
    <citation type="journal article" date="1970" name="J. Biochem.">
        <title>Regulation of aspartate family amino acid biosynthesis in Brevibacterium flavum. 3. Properties of homoserine dehydrogenase.</title>
        <authorList>
            <person name="Miyajima R."/>
            <person name="Shiio I."/>
        </authorList>
    </citation>
    <scope>CATALYTIC ACTIVITY</scope>
    <scope>ACTIVITY REGULATION</scope>
    <scope>BIOPHYSICOCHEMICAL PROPERTIES</scope>
</reference>
<reference key="7">
    <citation type="journal article" date="1991" name="Gene">
        <title>A C-terminal deletion in Corynebacterium glutamicum homoserine dehydrogenase abolishes allosteric inhibition by L-threonine.</title>
        <authorList>
            <person name="Archer J.A."/>
            <person name="Solow-Cordero D.E."/>
            <person name="Sinskey A.J."/>
        </authorList>
    </citation>
    <scope>CATALYTIC ACTIVITY</scope>
    <scope>ACTIVITY REGULATION</scope>
</reference>
<reference key="8">
    <citation type="journal article" date="1991" name="J. Bacteriol.">
        <title>Analysis of a Corynebacterium glutamicum hom gene coding for a feedback-resistant homoserine dehydrogenase.</title>
        <authorList>
            <person name="Reinscheid D.J."/>
            <person name="Eikmanns B.J."/>
            <person name="Sahm H."/>
        </authorList>
    </citation>
    <scope>MUTANT RESISTANT TO FEEDBACK INHIBITION (FBR)</scope>
</reference>
<accession>P08499</accession>
<feature type="chain" id="PRO_0000066693" description="Homoserine dehydrogenase">
    <location>
        <begin position="1"/>
        <end position="445"/>
    </location>
</feature>
<feature type="domain" description="ACT" evidence="5">
    <location>
        <begin position="368"/>
        <end position="445"/>
    </location>
</feature>
<feature type="active site" description="Proton donor" evidence="4">
    <location>
        <position position="219"/>
    </location>
</feature>
<feature type="binding site" evidence="2">
    <location>
        <position position="26"/>
    </location>
    <ligand>
        <name>NADPH</name>
        <dbReference type="ChEBI" id="CHEBI:57783"/>
    </ligand>
</feature>
<feature type="binding site" evidence="2">
    <location>
        <position position="28"/>
    </location>
    <ligand>
        <name>NADPH</name>
        <dbReference type="ChEBI" id="CHEBI:57783"/>
    </ligand>
</feature>
<feature type="binding site" evidence="3">
    <location>
        <position position="29"/>
    </location>
    <ligand>
        <name>NAD(+)</name>
        <dbReference type="ChEBI" id="CHEBI:57540"/>
    </ligand>
</feature>
<feature type="binding site" evidence="1">
    <location>
        <position position="29"/>
    </location>
    <ligand>
        <name>NADP(+)</name>
        <dbReference type="ChEBI" id="CHEBI:58349"/>
    </ligand>
</feature>
<feature type="binding site" evidence="2">
    <location>
        <position position="29"/>
    </location>
    <ligand>
        <name>NADPH</name>
        <dbReference type="ChEBI" id="CHEBI:57783"/>
    </ligand>
</feature>
<feature type="binding site" evidence="3">
    <location>
        <position position="58"/>
    </location>
    <ligand>
        <name>NAD(+)</name>
        <dbReference type="ChEBI" id="CHEBI:57540"/>
    </ligand>
</feature>
<feature type="binding site" evidence="1">
    <location>
        <position position="119"/>
    </location>
    <ligand>
        <name>NADP(+)</name>
        <dbReference type="ChEBI" id="CHEBI:58349"/>
    </ligand>
</feature>
<feature type="binding site" evidence="2">
    <location>
        <position position="119"/>
    </location>
    <ligand>
        <name>NADPH</name>
        <dbReference type="ChEBI" id="CHEBI:57783"/>
    </ligand>
</feature>
<feature type="binding site" evidence="3">
    <location>
        <position position="143"/>
    </location>
    <ligand>
        <name>Na(+)</name>
        <dbReference type="ChEBI" id="CHEBI:29101"/>
    </ligand>
</feature>
<feature type="binding site" evidence="3">
    <location>
        <position position="146"/>
    </location>
    <ligand>
        <name>Na(+)</name>
        <dbReference type="ChEBI" id="CHEBI:29101"/>
    </ligand>
</feature>
<feature type="binding site" evidence="3">
    <location>
        <position position="148"/>
    </location>
    <ligand>
        <name>Na(+)</name>
        <dbReference type="ChEBI" id="CHEBI:29101"/>
    </ligand>
</feature>
<feature type="binding site" evidence="3">
    <location>
        <position position="150"/>
    </location>
    <ligand>
        <name>Na(+)</name>
        <dbReference type="ChEBI" id="CHEBI:29101"/>
    </ligand>
</feature>
<feature type="binding site" evidence="1">
    <location>
        <position position="201"/>
    </location>
    <ligand>
        <name>NADP(+)</name>
        <dbReference type="ChEBI" id="CHEBI:58349"/>
    </ligand>
</feature>
<feature type="binding site" evidence="3">
    <location>
        <position position="204"/>
    </location>
    <ligand>
        <name>L-homoserine</name>
        <dbReference type="ChEBI" id="CHEBI:57476"/>
    </ligand>
</feature>
<feature type="binding site" evidence="1">
    <location>
        <position position="204"/>
    </location>
    <ligand>
        <name>NADP(+)</name>
        <dbReference type="ChEBI" id="CHEBI:58349"/>
    </ligand>
</feature>
<feature type="binding site" evidence="3">
    <location>
        <position position="215"/>
    </location>
    <ligand>
        <name>L-homoserine</name>
        <dbReference type="ChEBI" id="CHEBI:57476"/>
    </ligand>
</feature>
<feature type="binding site" evidence="3">
    <location>
        <position position="321"/>
    </location>
    <ligand>
        <name>NAD(+)</name>
        <dbReference type="ChEBI" id="CHEBI:57540"/>
    </ligand>
</feature>
<feature type="binding site" evidence="1">
    <location>
        <position position="321"/>
    </location>
    <ligand>
        <name>NADP(+)</name>
        <dbReference type="ChEBI" id="CHEBI:58349"/>
    </ligand>
</feature>
<feature type="binding site" evidence="2">
    <location>
        <position position="321"/>
    </location>
    <ligand>
        <name>NADPH</name>
        <dbReference type="ChEBI" id="CHEBI:57783"/>
    </ligand>
</feature>
<feature type="sequence variant" description="In FBR mutant.">
    <original>G</original>
    <variation>E</variation>
    <location>
        <position position="378"/>
    </location>
</feature>
<evidence type="ECO:0000250" key="1">
    <source>
        <dbReference type="UniProtKB" id="F9VNG5"/>
    </source>
</evidence>
<evidence type="ECO:0000250" key="2">
    <source>
        <dbReference type="UniProtKB" id="O58802"/>
    </source>
</evidence>
<evidence type="ECO:0000250" key="3">
    <source>
        <dbReference type="UniProtKB" id="P31116"/>
    </source>
</evidence>
<evidence type="ECO:0000255" key="4"/>
<evidence type="ECO:0000255" key="5">
    <source>
        <dbReference type="PROSITE-ProRule" id="PRU01007"/>
    </source>
</evidence>
<evidence type="ECO:0000269" key="6">
    <source>
    </source>
</evidence>
<evidence type="ECO:0000269" key="7">
    <source>
    </source>
</evidence>
<evidence type="ECO:0000305" key="8"/>
<sequence>MTSASAPSFNPGKGPGSAVGIALLGFGTVGTEVMRLMTEYGDELAHRIGGPLEVRGIAVSDISKPREGVAPELLTEDAFALIEREDVDIVVEVIGGIEYPREVVLAALKAGKSVVTANKALVAAHSAELADAAEAANVDLYFEAAVAGAIPVVGPLRRSLAGDQIQSVMGIVNGTTNFILDAMDSTGADYADSLAEATRLGYAEADPTADVEGHDAASKAAILASIAFHTRVTADDVYCEGISNISAADIEAAQQAGHTIKLLAICEKFTNKEGKSAISARVHPTLLPVSHPLASVNKSFNAIFVEAEAAGRLMFYGNGAGGAPTASAVLGDVVGAARNKVHGGRAPGESTYANLPIADFGETTTRYHLDMDVEDRVGVLAELASLFSEQGISLRTIRQEERDDDARLIVVTHSALESDLSRTVELLKAKPVVKAINSVIRLERD</sequence>
<comment type="function">
    <text evidence="3">Catalyzes the conversion of L-aspartate-beta-semialdehyde (L-Asa) to L-homoserine (L-Hse), the third step in the biosynthesis of threonine and methionine from aspartate.</text>
</comment>
<comment type="catalytic activity">
    <reaction evidence="6 7">
        <text>L-homoserine + NADP(+) = L-aspartate 4-semialdehyde + NADPH + H(+)</text>
        <dbReference type="Rhea" id="RHEA:15761"/>
        <dbReference type="ChEBI" id="CHEBI:15378"/>
        <dbReference type="ChEBI" id="CHEBI:57476"/>
        <dbReference type="ChEBI" id="CHEBI:57783"/>
        <dbReference type="ChEBI" id="CHEBI:58349"/>
        <dbReference type="ChEBI" id="CHEBI:537519"/>
        <dbReference type="EC" id="1.1.1.3"/>
    </reaction>
    <physiologicalReaction direction="right-to-left" evidence="6 7">
        <dbReference type="Rhea" id="RHEA:15763"/>
    </physiologicalReaction>
</comment>
<comment type="catalytic activity">
    <reaction evidence="6 7">
        <text>L-homoserine + NAD(+) = L-aspartate 4-semialdehyde + NADH + H(+)</text>
        <dbReference type="Rhea" id="RHEA:15757"/>
        <dbReference type="ChEBI" id="CHEBI:15378"/>
        <dbReference type="ChEBI" id="CHEBI:57476"/>
        <dbReference type="ChEBI" id="CHEBI:57540"/>
        <dbReference type="ChEBI" id="CHEBI:57945"/>
        <dbReference type="ChEBI" id="CHEBI:537519"/>
        <dbReference type="EC" id="1.1.1.3"/>
    </reaction>
    <physiologicalReaction direction="right-to-left" evidence="6 7">
        <dbReference type="Rhea" id="RHEA:15759"/>
    </physiologicalReaction>
</comment>
<comment type="cofactor">
    <cofactor evidence="3">
        <name>a metal cation</name>
        <dbReference type="ChEBI" id="CHEBI:25213"/>
    </cofactor>
    <text evidence="3">A sodium ion is seen in the structure; a metal ion may subtly affect the relative position of the nucleotide-binding region to influence enzyme activity, and could increase the stability of the enzyme.</text>
</comment>
<comment type="activity regulation">
    <text evidence="6 7">Feedback inhibition by threonine.</text>
</comment>
<comment type="biophysicochemical properties">
    <kinetics>
        <KM evidence="7">190 uM for L-aspartate 4-semialdehyde</KM>
        <KM evidence="7">37.4 uM for NADPH</KM>
    </kinetics>
    <phDependence>
        <text evidence="7">Optimum pH is 6.0.</text>
    </phDependence>
</comment>
<comment type="pathway">
    <text evidence="3">Amino-acid biosynthesis; L-methionine biosynthesis via de novo pathway; L-homoserine from L-aspartate: step 3/3.</text>
</comment>
<comment type="pathway">
    <text evidence="3">Amino-acid biosynthesis; L-threonine biosynthesis; L-threonine from L-aspartate: step 3/5.</text>
</comment>
<comment type="similarity">
    <text evidence="8">Belongs to the homoserine dehydrogenase family.</text>
</comment>